<feature type="chain" id="PRO_1000120227" description="GMP synthase [glutamine-hydrolyzing]">
    <location>
        <begin position="1"/>
        <end position="520"/>
    </location>
</feature>
<feature type="domain" description="Glutamine amidotransferase type-1" evidence="1">
    <location>
        <begin position="9"/>
        <end position="202"/>
    </location>
</feature>
<feature type="domain" description="GMPS ATP-PPase" evidence="1">
    <location>
        <begin position="203"/>
        <end position="395"/>
    </location>
</feature>
<feature type="active site" description="Nucleophile" evidence="1">
    <location>
        <position position="86"/>
    </location>
</feature>
<feature type="active site" evidence="1">
    <location>
        <position position="176"/>
    </location>
</feature>
<feature type="active site" evidence="1">
    <location>
        <position position="178"/>
    </location>
</feature>
<feature type="binding site" evidence="1">
    <location>
        <begin position="230"/>
        <end position="236"/>
    </location>
    <ligand>
        <name>ATP</name>
        <dbReference type="ChEBI" id="CHEBI:30616"/>
    </ligand>
</feature>
<sequence>MSTTAYPDTILIIDFGSQVTQLIARRVREANVYCEIVPFQSADEAFKRLQPKGVILSGSPHSTTDIGSPRAPQAIFDAGIPVLGICYGEQTMCAQLGGNVESGHDREFGRAFLDVQEDSPLFAGIWAKGTRHQVWMSHGDRVTSLPDGFTIIGTSPNAPYAVIADEKRKYYGVQFHPEVVHTPDGAKLLQNFVHRIVGVKPGWTMGAYREQAVEAIRKQVGSGKVICALSGGVDSSVAALLAHEAVGDQLTCILVDHGLMRKDEAQQVVEMFREHYNLPLILVDASDRFIGALESESDPEKKRKTIGRLFIEVFEEEARKLGGADFLVQGTLYPDVIESVSFTGGPSVTIKSHHNVGGLPERMKMQLVEPLRELFKDEVRLLGKELGLPDSFIGRHPFPGPGLAIRCPGGVTREKLEILREADAIYLDEIRKAGLYDAIWQAFAVLLPVQTVGVMGDGRTYEFVCALRAVTSVDGMTADFYHYDMNFLGNAATRIINEVRGINRVVYDVTSKPPGTIEWE</sequence>
<organism>
    <name type="scientific">Brucella ovis (strain ATCC 25840 / 63/290 / NCTC 10512)</name>
    <dbReference type="NCBI Taxonomy" id="444178"/>
    <lineage>
        <taxon>Bacteria</taxon>
        <taxon>Pseudomonadati</taxon>
        <taxon>Pseudomonadota</taxon>
        <taxon>Alphaproteobacteria</taxon>
        <taxon>Hyphomicrobiales</taxon>
        <taxon>Brucellaceae</taxon>
        <taxon>Brucella/Ochrobactrum group</taxon>
        <taxon>Brucella</taxon>
    </lineage>
</organism>
<protein>
    <recommendedName>
        <fullName evidence="1">GMP synthase [glutamine-hydrolyzing]</fullName>
        <ecNumber evidence="1">6.3.5.2</ecNumber>
    </recommendedName>
    <alternativeName>
        <fullName evidence="1">GMP synthetase</fullName>
    </alternativeName>
    <alternativeName>
        <fullName evidence="1">Glutamine amidotransferase</fullName>
    </alternativeName>
</protein>
<comment type="function">
    <text evidence="1">Catalyzes the synthesis of GMP from XMP.</text>
</comment>
<comment type="catalytic activity">
    <reaction evidence="1">
        <text>XMP + L-glutamine + ATP + H2O = GMP + L-glutamate + AMP + diphosphate + 2 H(+)</text>
        <dbReference type="Rhea" id="RHEA:11680"/>
        <dbReference type="ChEBI" id="CHEBI:15377"/>
        <dbReference type="ChEBI" id="CHEBI:15378"/>
        <dbReference type="ChEBI" id="CHEBI:29985"/>
        <dbReference type="ChEBI" id="CHEBI:30616"/>
        <dbReference type="ChEBI" id="CHEBI:33019"/>
        <dbReference type="ChEBI" id="CHEBI:57464"/>
        <dbReference type="ChEBI" id="CHEBI:58115"/>
        <dbReference type="ChEBI" id="CHEBI:58359"/>
        <dbReference type="ChEBI" id="CHEBI:456215"/>
        <dbReference type="EC" id="6.3.5.2"/>
    </reaction>
</comment>
<comment type="pathway">
    <text evidence="1">Purine metabolism; GMP biosynthesis; GMP from XMP (L-Gln route): step 1/1.</text>
</comment>
<comment type="subunit">
    <text evidence="1">Homodimer.</text>
</comment>
<accession>A5VU71</accession>
<name>GUAA_BRUO2</name>
<gene>
    <name evidence="1" type="primary">guaA</name>
    <name type="ordered locus">BOV_A0328</name>
</gene>
<evidence type="ECO:0000255" key="1">
    <source>
        <dbReference type="HAMAP-Rule" id="MF_00344"/>
    </source>
</evidence>
<proteinExistence type="inferred from homology"/>
<reference key="1">
    <citation type="journal article" date="2009" name="PLoS ONE">
        <title>Genome degradation in Brucella ovis corresponds with narrowing of its host range and tissue tropism.</title>
        <authorList>
            <person name="Tsolis R.M."/>
            <person name="Seshadri R."/>
            <person name="Santos R.L."/>
            <person name="Sangari F.J."/>
            <person name="Lobo J.M."/>
            <person name="de Jong M.F."/>
            <person name="Ren Q."/>
            <person name="Myers G."/>
            <person name="Brinkac L.M."/>
            <person name="Nelson W.C."/>
            <person name="Deboy R.T."/>
            <person name="Angiuoli S."/>
            <person name="Khouri H."/>
            <person name="Dimitrov G."/>
            <person name="Robinson J.R."/>
            <person name="Mulligan S."/>
            <person name="Walker R.L."/>
            <person name="Elzer P.E."/>
            <person name="Hassan K.A."/>
            <person name="Paulsen I.T."/>
        </authorList>
    </citation>
    <scope>NUCLEOTIDE SEQUENCE [LARGE SCALE GENOMIC DNA]</scope>
    <source>
        <strain>ATCC 25840 / 63/290 / NCTC 10512</strain>
    </source>
</reference>
<dbReference type="EC" id="6.3.5.2" evidence="1"/>
<dbReference type="EMBL" id="CP000709">
    <property type="protein sequence ID" value="ABQ62890.1"/>
    <property type="molecule type" value="Genomic_DNA"/>
</dbReference>
<dbReference type="RefSeq" id="WP_006015544.1">
    <property type="nucleotide sequence ID" value="NC_009504.1"/>
</dbReference>
<dbReference type="SMR" id="A5VU71"/>
<dbReference type="GeneID" id="45125735"/>
<dbReference type="KEGG" id="bov:BOV_A0328"/>
<dbReference type="HOGENOM" id="CLU_014340_0_5_5"/>
<dbReference type="PhylomeDB" id="A5VU71"/>
<dbReference type="UniPathway" id="UPA00189">
    <property type="reaction ID" value="UER00296"/>
</dbReference>
<dbReference type="Proteomes" id="UP000006383">
    <property type="component" value="Chromosome II"/>
</dbReference>
<dbReference type="GO" id="GO:0005829">
    <property type="term" value="C:cytosol"/>
    <property type="evidence" value="ECO:0007669"/>
    <property type="project" value="TreeGrafter"/>
</dbReference>
<dbReference type="GO" id="GO:0005524">
    <property type="term" value="F:ATP binding"/>
    <property type="evidence" value="ECO:0007669"/>
    <property type="project" value="UniProtKB-UniRule"/>
</dbReference>
<dbReference type="GO" id="GO:0003921">
    <property type="term" value="F:GMP synthase activity"/>
    <property type="evidence" value="ECO:0007669"/>
    <property type="project" value="InterPro"/>
</dbReference>
<dbReference type="CDD" id="cd01742">
    <property type="entry name" value="GATase1_GMP_Synthase"/>
    <property type="match status" value="1"/>
</dbReference>
<dbReference type="CDD" id="cd01997">
    <property type="entry name" value="GMP_synthase_C"/>
    <property type="match status" value="1"/>
</dbReference>
<dbReference type="FunFam" id="3.30.300.10:FF:000002">
    <property type="entry name" value="GMP synthase [glutamine-hydrolyzing]"/>
    <property type="match status" value="1"/>
</dbReference>
<dbReference type="FunFam" id="3.40.50.620:FF:000001">
    <property type="entry name" value="GMP synthase [glutamine-hydrolyzing]"/>
    <property type="match status" value="1"/>
</dbReference>
<dbReference type="FunFam" id="3.40.50.880:FF:000001">
    <property type="entry name" value="GMP synthase [glutamine-hydrolyzing]"/>
    <property type="match status" value="1"/>
</dbReference>
<dbReference type="Gene3D" id="3.30.300.10">
    <property type="match status" value="1"/>
</dbReference>
<dbReference type="Gene3D" id="3.40.50.880">
    <property type="match status" value="1"/>
</dbReference>
<dbReference type="Gene3D" id="3.40.50.620">
    <property type="entry name" value="HUPs"/>
    <property type="match status" value="1"/>
</dbReference>
<dbReference type="HAMAP" id="MF_00344">
    <property type="entry name" value="GMP_synthase"/>
    <property type="match status" value="1"/>
</dbReference>
<dbReference type="InterPro" id="IPR029062">
    <property type="entry name" value="Class_I_gatase-like"/>
</dbReference>
<dbReference type="InterPro" id="IPR017926">
    <property type="entry name" value="GATASE"/>
</dbReference>
<dbReference type="InterPro" id="IPR001674">
    <property type="entry name" value="GMP_synth_C"/>
</dbReference>
<dbReference type="InterPro" id="IPR004739">
    <property type="entry name" value="GMP_synth_GATase"/>
</dbReference>
<dbReference type="InterPro" id="IPR022955">
    <property type="entry name" value="GMP_synthase"/>
</dbReference>
<dbReference type="InterPro" id="IPR025777">
    <property type="entry name" value="GMPS_ATP_PPase_dom"/>
</dbReference>
<dbReference type="InterPro" id="IPR022310">
    <property type="entry name" value="NAD/GMP_synthase"/>
</dbReference>
<dbReference type="InterPro" id="IPR014729">
    <property type="entry name" value="Rossmann-like_a/b/a_fold"/>
</dbReference>
<dbReference type="NCBIfam" id="TIGR00884">
    <property type="entry name" value="guaA_Cterm"/>
    <property type="match status" value="1"/>
</dbReference>
<dbReference type="NCBIfam" id="TIGR00888">
    <property type="entry name" value="guaA_Nterm"/>
    <property type="match status" value="1"/>
</dbReference>
<dbReference type="NCBIfam" id="NF000848">
    <property type="entry name" value="PRK00074.1"/>
    <property type="match status" value="1"/>
</dbReference>
<dbReference type="PANTHER" id="PTHR11922:SF2">
    <property type="entry name" value="GMP SYNTHASE [GLUTAMINE-HYDROLYZING]"/>
    <property type="match status" value="1"/>
</dbReference>
<dbReference type="PANTHER" id="PTHR11922">
    <property type="entry name" value="GMP SYNTHASE-RELATED"/>
    <property type="match status" value="1"/>
</dbReference>
<dbReference type="Pfam" id="PF00117">
    <property type="entry name" value="GATase"/>
    <property type="match status" value="1"/>
</dbReference>
<dbReference type="Pfam" id="PF00958">
    <property type="entry name" value="GMP_synt_C"/>
    <property type="match status" value="1"/>
</dbReference>
<dbReference type="Pfam" id="PF02540">
    <property type="entry name" value="NAD_synthase"/>
    <property type="match status" value="1"/>
</dbReference>
<dbReference type="PRINTS" id="PR00097">
    <property type="entry name" value="ANTSNTHASEII"/>
</dbReference>
<dbReference type="PRINTS" id="PR00096">
    <property type="entry name" value="GATASE"/>
</dbReference>
<dbReference type="SUPFAM" id="SSF52402">
    <property type="entry name" value="Adenine nucleotide alpha hydrolases-like"/>
    <property type="match status" value="1"/>
</dbReference>
<dbReference type="SUPFAM" id="SSF52317">
    <property type="entry name" value="Class I glutamine amidotransferase-like"/>
    <property type="match status" value="1"/>
</dbReference>
<dbReference type="SUPFAM" id="SSF54810">
    <property type="entry name" value="GMP synthetase C-terminal dimerisation domain"/>
    <property type="match status" value="1"/>
</dbReference>
<dbReference type="PROSITE" id="PS51273">
    <property type="entry name" value="GATASE_TYPE_1"/>
    <property type="match status" value="1"/>
</dbReference>
<dbReference type="PROSITE" id="PS51553">
    <property type="entry name" value="GMPS_ATP_PPASE"/>
    <property type="match status" value="1"/>
</dbReference>
<keyword id="KW-0067">ATP-binding</keyword>
<keyword id="KW-0315">Glutamine amidotransferase</keyword>
<keyword id="KW-0332">GMP biosynthesis</keyword>
<keyword id="KW-0436">Ligase</keyword>
<keyword id="KW-0547">Nucleotide-binding</keyword>
<keyword id="KW-0658">Purine biosynthesis</keyword>